<gene>
    <name evidence="1" type="primary">dabA1</name>
    <name type="ordered locus">RB1129</name>
</gene>
<name>DABA1_RHOBA</name>
<sequence>MTNKANLPSNESIMNTLAPEQKKSKANAQPFSVFVPAAYEDPHVYRQVEELLDQVCQVVSPVWPLKDWIAVNPYAGLSERSFHESRDYLRVFSKCELLPSMDHFSAHYQSGSFAESHIEAALLENSPGKDLSQKKADVLKALQTRLHTGDASKQTMPEKSSLPRIATIADRLSAHGEVDWTEIVKDEIGKHCSAHYDEGQSTWASPWRNLPLYQAWRNKAKIDRGIEILGLTGFRHFVDELPHTVEATIVHLLQRLNIPRALWETFLLAHAFSLPGWSGWTKYQGLQTDPTGTGRMQFDDFRGLLAMSLAYDVAISEAFLFEVNWSSVLDHQSLSLMDSDNDCKSDRKILLRAMEIAYRDDLLAKLPVRELTTDHVADEDFEEPTNLATKPAVQMAFCIDVRSERFRRHLEQVDASVDTLGIAGFFGLPFEYVPLGQSSGDTHAPVLLSPKFALREKSSPCVGDCATSRNDTAEKQVSVRNGKKLWKRLQTSAVGCFSFVETIGLFSGFDLATRLMSPKFRNSLRIKHPSKLHDVEATPLDLDHLVEQGIDLDQQTDLVEGLLNSMGLSDDFAPLVVLCGHGSQTDNNAMAAGLDCGACGGHSGAPNARLAAILLNDRRIQKRLSDRGIEIPAETHVIAAWHNTTTDQIEWLDLDAVPASHQSRIVELQNVADAASHLTREERLPLLNESCTDSLISRASDWSQTRPEWGLAGNASMLIGPRELTRGRSLDGRVFLHSYNQTTDPKGAVLESILTAPMVVAHWINMQYYASTVDPTLFGSGCKTIHNVVGQFGVLSGNGGDLQAGLPNQSLGCGLKMQHLPLRLQTVVVASRESIDRVIAKHANIRNLLQNGWVHMVAIDSGQKYRYHSDGSWVQLRTENTSRAESEWQVVGGTC</sequence>
<keyword id="KW-0997">Cell inner membrane</keyword>
<keyword id="KW-1003">Cell membrane</keyword>
<keyword id="KW-0472">Membrane</keyword>
<keyword id="KW-0479">Metal-binding</keyword>
<keyword id="KW-1185">Reference proteome</keyword>
<keyword id="KW-0813">Transport</keyword>
<keyword id="KW-0862">Zinc</keyword>
<organism>
    <name type="scientific">Rhodopirellula baltica (strain DSM 10527 / NCIMB 13988 / SH1)</name>
    <dbReference type="NCBI Taxonomy" id="243090"/>
    <lineage>
        <taxon>Bacteria</taxon>
        <taxon>Pseudomonadati</taxon>
        <taxon>Planctomycetota</taxon>
        <taxon>Planctomycetia</taxon>
        <taxon>Pirellulales</taxon>
        <taxon>Pirellulaceae</taxon>
        <taxon>Rhodopirellula</taxon>
    </lineage>
</organism>
<comment type="function">
    <text evidence="1">Part of an energy-coupled inorganic carbon pump.</text>
</comment>
<comment type="cofactor">
    <cofactor evidence="1">
        <name>Zn(2+)</name>
        <dbReference type="ChEBI" id="CHEBI:29105"/>
    </cofactor>
</comment>
<comment type="subunit">
    <text evidence="1">Forms a complex with DabB.</text>
</comment>
<comment type="subcellular location">
    <subcellularLocation>
        <location evidence="1">Cell inner membrane</location>
        <topology evidence="1">Peripheral membrane protein</topology>
    </subcellularLocation>
</comment>
<comment type="similarity">
    <text evidence="1">Belongs to the inorganic carbon transporter (TC 9.A.2) DabA family.</text>
</comment>
<protein>
    <recommendedName>
        <fullName evidence="1">Probable inorganic carbon transporter subunit DabA 1</fullName>
    </recommendedName>
</protein>
<feature type="chain" id="PRO_0000387289" description="Probable inorganic carbon transporter subunit DabA 1">
    <location>
        <begin position="1"/>
        <end position="895"/>
    </location>
</feature>
<feature type="binding site" evidence="1">
    <location>
        <position position="398"/>
    </location>
    <ligand>
        <name>Zn(2+)</name>
        <dbReference type="ChEBI" id="CHEBI:29105"/>
    </ligand>
</feature>
<feature type="binding site" evidence="1">
    <location>
        <position position="400"/>
    </location>
    <ligand>
        <name>Zn(2+)</name>
        <dbReference type="ChEBI" id="CHEBI:29105"/>
    </ligand>
</feature>
<feature type="binding site" evidence="1">
    <location>
        <position position="581"/>
    </location>
    <ligand>
        <name>Zn(2+)</name>
        <dbReference type="ChEBI" id="CHEBI:29105"/>
    </ligand>
</feature>
<feature type="binding site" evidence="1">
    <location>
        <position position="596"/>
    </location>
    <ligand>
        <name>Zn(2+)</name>
        <dbReference type="ChEBI" id="CHEBI:29105"/>
    </ligand>
</feature>
<reference key="1">
    <citation type="journal article" date="2003" name="Proc. Natl. Acad. Sci. U.S.A.">
        <title>Complete genome sequence of the marine planctomycete Pirellula sp. strain 1.</title>
        <authorList>
            <person name="Gloeckner F.O."/>
            <person name="Kube M."/>
            <person name="Bauer M."/>
            <person name="Teeling H."/>
            <person name="Lombardot T."/>
            <person name="Ludwig W."/>
            <person name="Gade D."/>
            <person name="Beck A."/>
            <person name="Borzym K."/>
            <person name="Heitmann K."/>
            <person name="Rabus R."/>
            <person name="Schlesner H."/>
            <person name="Amann R."/>
            <person name="Reinhardt R."/>
        </authorList>
    </citation>
    <scope>NUCLEOTIDE SEQUENCE [LARGE SCALE GENOMIC DNA]</scope>
    <source>
        <strain>DSM 10527 / NCIMB 13988 / SH1</strain>
    </source>
</reference>
<accession>Q7UXT7</accession>
<evidence type="ECO:0000255" key="1">
    <source>
        <dbReference type="HAMAP-Rule" id="MF_01871"/>
    </source>
</evidence>
<dbReference type="EMBL" id="BX294134">
    <property type="protein sequence ID" value="CAD71916.1"/>
    <property type="molecule type" value="Genomic_DNA"/>
</dbReference>
<dbReference type="RefSeq" id="NP_864237.1">
    <property type="nucleotide sequence ID" value="NC_005027.1"/>
</dbReference>
<dbReference type="RefSeq" id="WP_011118218.1">
    <property type="nucleotide sequence ID" value="NC_005027.1"/>
</dbReference>
<dbReference type="STRING" id="243090.RB1129"/>
<dbReference type="EnsemblBacteria" id="CAD71916">
    <property type="protein sequence ID" value="CAD71916"/>
    <property type="gene ID" value="RB1129"/>
</dbReference>
<dbReference type="KEGG" id="rba:RB1129"/>
<dbReference type="PATRIC" id="fig|243090.15.peg.517"/>
<dbReference type="eggNOG" id="COG3002">
    <property type="taxonomic scope" value="Bacteria"/>
</dbReference>
<dbReference type="HOGENOM" id="CLU_009885_0_0_0"/>
<dbReference type="InParanoid" id="Q7UXT7"/>
<dbReference type="OrthoDB" id="9805101at2"/>
<dbReference type="Proteomes" id="UP000001025">
    <property type="component" value="Chromosome"/>
</dbReference>
<dbReference type="GO" id="GO:0005886">
    <property type="term" value="C:plasma membrane"/>
    <property type="evidence" value="ECO:0007669"/>
    <property type="project" value="UniProtKB-SubCell"/>
</dbReference>
<dbReference type="GO" id="GO:0008270">
    <property type="term" value="F:zinc ion binding"/>
    <property type="evidence" value="ECO:0007669"/>
    <property type="project" value="UniProtKB-UniRule"/>
</dbReference>
<dbReference type="HAMAP" id="MF_01871">
    <property type="entry name" value="DabA"/>
    <property type="match status" value="1"/>
</dbReference>
<dbReference type="InterPro" id="IPR018752">
    <property type="entry name" value="DabA"/>
</dbReference>
<dbReference type="PANTHER" id="PTHR38344:SF1">
    <property type="entry name" value="INORGANIC CARBON TRANSPORTER SUBUNIT DABA-RELATED"/>
    <property type="match status" value="1"/>
</dbReference>
<dbReference type="PANTHER" id="PTHR38344">
    <property type="entry name" value="UPF0753 PROTEIN AQ_863"/>
    <property type="match status" value="1"/>
</dbReference>
<dbReference type="Pfam" id="PF10070">
    <property type="entry name" value="DabA"/>
    <property type="match status" value="1"/>
</dbReference>
<proteinExistence type="inferred from homology"/>